<comment type="function">
    <text evidence="4">Transcription factor that mediates regulation of both acid- and alkaline-expressed genes in response to ambient pH. At alkaline ambient pH, activates transcription of alkaline-expressed genes (including pacC itself) and represses transcription of acid-expressed genes. Specifically recognizes and binds the consensus sequence 5'-GCCARG-3'. May act as a negative regulator of virulence to plants.</text>
</comment>
<comment type="subcellular location">
    <subcellularLocation>
        <location evidence="1">Cytoplasm</location>
    </subcellularLocation>
    <subcellularLocation>
        <location evidence="1">Nucleus</location>
    </subcellularLocation>
</comment>
<comment type="induction">
    <text evidence="4">By alkaline conditions and during infection of tomato roots.</text>
</comment>
<comment type="PTM">
    <text evidence="4">Activated by C-terminal proteolytic cleavage. At neutral to alkaline ambient pH, the signaling protease cleaves pacC within the conserved 24-residue signaling protease box. In an ambient pH-independent reaction, the processing protease (probably the proteasome) removes additional C-terminal residues to yield the functional form.</text>
</comment>
<comment type="similarity">
    <text evidence="5">Belongs to the pacC/RIM101 family.</text>
</comment>
<sequence>MSPPAPEQKPQLQQQQQQGSSSGDSSSGSANDSKSVTPAPSATSNTSQSSTAPSTSSDDNLICRWNACNQKFPAPEALYEHICERHVGRKSTNNLNLTCQWNSCRTTTVKRDHITSHIRVHVPLKPHKCEFCGKSFKRPQDLKKHVKTHADDSVLVRPSQDPQGGLNYRPQPPKGPSSYYDHTGQMRTNAAAFAHQAGHPSGGYYAPQPSTNYGLYFNQPPINNARTEHLGYSAAAGGYDRKRTYDMVDDFFGSAKRRQIDPSSYAQIGRSLMPLHGNLSVPNGPMTATEQYMPQPAPAPVHAGPTPSKTPSAQQYYLPMPSARTQKDLIHIDTILGQMQDTIYENANHATAGVHIHHAENGFNGYRNTPSPPTSHRSPTGMHVGADGYQPVSAASMASPLTAISSTGTPAVTASSSMSYTSGHSPSPSSSAMSPQSRHGSTASVMYPTLPTSLPAVSQGFGHSATTTLGPSFDGSERRRYSGGMLQRARAGPLPLPHEDTSGASTPKASESALSVGSPSSESDVSDATREREEQYDRWLENMRVIETLREYVRGRLERKEFVDDNESPRSSHSDAMDVDPKSPQAPPRELGTPREGSSLYPILRMPGA</sequence>
<dbReference type="EMBL" id="AY125958">
    <property type="protein sequence ID" value="AAM95700.1"/>
    <property type="molecule type" value="Genomic_DNA"/>
</dbReference>
<dbReference type="EMBL" id="AAXH01000132">
    <property type="status" value="NOT_ANNOTATED_CDS"/>
    <property type="molecule type" value="Genomic_DNA"/>
</dbReference>
<dbReference type="STRING" id="426428.Q870A3"/>
<dbReference type="PHI-base" id="PHI:315"/>
<dbReference type="PHI-base" id="PHI:7241"/>
<dbReference type="GO" id="GO:0005737">
    <property type="term" value="C:cytoplasm"/>
    <property type="evidence" value="ECO:0007669"/>
    <property type="project" value="UniProtKB-SubCell"/>
</dbReference>
<dbReference type="GO" id="GO:0005634">
    <property type="term" value="C:nucleus"/>
    <property type="evidence" value="ECO:0007669"/>
    <property type="project" value="UniProtKB-SubCell"/>
</dbReference>
<dbReference type="GO" id="GO:0003677">
    <property type="term" value="F:DNA binding"/>
    <property type="evidence" value="ECO:0007669"/>
    <property type="project" value="UniProtKB-KW"/>
</dbReference>
<dbReference type="GO" id="GO:0008270">
    <property type="term" value="F:zinc ion binding"/>
    <property type="evidence" value="ECO:0007669"/>
    <property type="project" value="UniProtKB-KW"/>
</dbReference>
<dbReference type="GO" id="GO:0045944">
    <property type="term" value="P:positive regulation of transcription by RNA polymerase II"/>
    <property type="evidence" value="ECO:0007669"/>
    <property type="project" value="TreeGrafter"/>
</dbReference>
<dbReference type="FunFam" id="3.30.160.60:FF:000458">
    <property type="entry name" value="pH-response transcription factor pacC/RIM101"/>
    <property type="match status" value="1"/>
</dbReference>
<dbReference type="FunFam" id="3.30.160.60:FF:001875">
    <property type="entry name" value="pH-response transcription factor pacC/RIM101"/>
    <property type="match status" value="1"/>
</dbReference>
<dbReference type="Gene3D" id="3.30.160.60">
    <property type="entry name" value="Classic Zinc Finger"/>
    <property type="match status" value="2"/>
</dbReference>
<dbReference type="InterPro" id="IPR050806">
    <property type="entry name" value="pacC/RIM101"/>
</dbReference>
<dbReference type="InterPro" id="IPR036236">
    <property type="entry name" value="Znf_C2H2_sf"/>
</dbReference>
<dbReference type="InterPro" id="IPR013087">
    <property type="entry name" value="Znf_C2H2_type"/>
</dbReference>
<dbReference type="PANTHER" id="PTHR47257">
    <property type="entry name" value="PH-RESPONSE TRANSCRIPTION FACTOR PACC/RIM101"/>
    <property type="match status" value="1"/>
</dbReference>
<dbReference type="PANTHER" id="PTHR47257:SF1">
    <property type="entry name" value="PH-RESPONSE TRANSCRIPTION FACTOR PACC_RIM101"/>
    <property type="match status" value="1"/>
</dbReference>
<dbReference type="Pfam" id="PF00096">
    <property type="entry name" value="zf-C2H2"/>
    <property type="match status" value="1"/>
</dbReference>
<dbReference type="SMART" id="SM00355">
    <property type="entry name" value="ZnF_C2H2"/>
    <property type="match status" value="3"/>
</dbReference>
<dbReference type="SUPFAM" id="SSF57667">
    <property type="entry name" value="beta-beta-alpha zinc fingers"/>
    <property type="match status" value="2"/>
</dbReference>
<dbReference type="PROSITE" id="PS00028">
    <property type="entry name" value="ZINC_FINGER_C2H2_1"/>
    <property type="match status" value="2"/>
</dbReference>
<dbReference type="PROSITE" id="PS50157">
    <property type="entry name" value="ZINC_FINGER_C2H2_2"/>
    <property type="match status" value="3"/>
</dbReference>
<evidence type="ECO:0000250" key="1"/>
<evidence type="ECO:0000255" key="2">
    <source>
        <dbReference type="PROSITE-ProRule" id="PRU00042"/>
    </source>
</evidence>
<evidence type="ECO:0000256" key="3">
    <source>
        <dbReference type="SAM" id="MobiDB-lite"/>
    </source>
</evidence>
<evidence type="ECO:0000269" key="4">
    <source>
    </source>
</evidence>
<evidence type="ECO:0000305" key="5"/>
<organism>
    <name type="scientific">Fusarium oxysporum f. sp. lycopersici (strain 4287 / CBS 123668 / FGSC 9935 / NRRL 34936)</name>
    <name type="common">Fusarium vascular wilt of tomato</name>
    <dbReference type="NCBI Taxonomy" id="426428"/>
    <lineage>
        <taxon>Eukaryota</taxon>
        <taxon>Fungi</taxon>
        <taxon>Dikarya</taxon>
        <taxon>Ascomycota</taxon>
        <taxon>Pezizomycotina</taxon>
        <taxon>Sordariomycetes</taxon>
        <taxon>Hypocreomycetidae</taxon>
        <taxon>Hypocreales</taxon>
        <taxon>Nectriaceae</taxon>
        <taxon>Fusarium</taxon>
        <taxon>Fusarium oxysporum species complex</taxon>
    </lineage>
</organism>
<gene>
    <name type="primary">pacC</name>
    <name type="ORF">FOXG_02222</name>
</gene>
<reference key="1">
    <citation type="journal article" date="2003" name="Mol. Microbiol.">
        <title>The pH signalling transcription factor PacC controls virulence in the plant pathogen Fusarium oxysporum.</title>
        <authorList>
            <person name="Caracuel Z."/>
            <person name="Roncero M.I.G."/>
            <person name="Espeso E.A."/>
            <person name="Gonzalez-Verdejo C.I."/>
            <person name="Garcia-Maceira F.I."/>
            <person name="Di Pietro A."/>
        </authorList>
    </citation>
    <scope>NUCLEOTIDE SEQUENCE [GENOMIC DNA]</scope>
    <scope>FUNCTION</scope>
    <scope>DNA-BINDING</scope>
    <scope>INDUCTION</scope>
    <scope>PROTEOLYTIC PROCESSING</scope>
    <source>
        <strain>4287 / CBS 123668 / FGSC 9935 / NRRL 34936</strain>
    </source>
</reference>
<reference key="2">
    <citation type="journal article" date="2010" name="Nature">
        <title>Comparative genomics reveals mobile pathogenicity chromosomes in Fusarium.</title>
        <authorList>
            <person name="Ma L.-J."/>
            <person name="van der Does H.C."/>
            <person name="Borkovich K.A."/>
            <person name="Coleman J.J."/>
            <person name="Daboussi M.-J."/>
            <person name="Di Pietro A."/>
            <person name="Dufresne M."/>
            <person name="Freitag M."/>
            <person name="Grabherr M."/>
            <person name="Henrissat B."/>
            <person name="Houterman P.M."/>
            <person name="Kang S."/>
            <person name="Shim W.-B."/>
            <person name="Woloshuk C."/>
            <person name="Xie X."/>
            <person name="Xu J.-R."/>
            <person name="Antoniw J."/>
            <person name="Baker S.E."/>
            <person name="Bluhm B.H."/>
            <person name="Breakspear A."/>
            <person name="Brown D.W."/>
            <person name="Butchko R.A.E."/>
            <person name="Chapman S."/>
            <person name="Coulson R."/>
            <person name="Coutinho P.M."/>
            <person name="Danchin E.G.J."/>
            <person name="Diener A."/>
            <person name="Gale L.R."/>
            <person name="Gardiner D.M."/>
            <person name="Goff S."/>
            <person name="Hammond-Kosack K.E."/>
            <person name="Hilburn K."/>
            <person name="Hua-Van A."/>
            <person name="Jonkers W."/>
            <person name="Kazan K."/>
            <person name="Kodira C.D."/>
            <person name="Koehrsen M."/>
            <person name="Kumar L."/>
            <person name="Lee Y.-H."/>
            <person name="Li L."/>
            <person name="Manners J.M."/>
            <person name="Miranda-Saavedra D."/>
            <person name="Mukherjee M."/>
            <person name="Park G."/>
            <person name="Park J."/>
            <person name="Park S.-Y."/>
            <person name="Proctor R.H."/>
            <person name="Regev A."/>
            <person name="Ruiz-Roldan M.C."/>
            <person name="Sain D."/>
            <person name="Sakthikumar S."/>
            <person name="Sykes S."/>
            <person name="Schwartz D.C."/>
            <person name="Turgeon B.G."/>
            <person name="Wapinski I."/>
            <person name="Yoder O."/>
            <person name="Young S."/>
            <person name="Zeng Q."/>
            <person name="Zhou S."/>
            <person name="Galagan J."/>
            <person name="Cuomo C.A."/>
            <person name="Kistler H.C."/>
            <person name="Rep M."/>
        </authorList>
    </citation>
    <scope>NUCLEOTIDE SEQUENCE [LARGE SCALE GENOMIC DNA]</scope>
    <source>
        <strain>4287 / CBS 123668 / FGSC 9935 / NRRL 34936</strain>
    </source>
</reference>
<proteinExistence type="evidence at protein level"/>
<keyword id="KW-0010">Activator</keyword>
<keyword id="KW-0963">Cytoplasm</keyword>
<keyword id="KW-0238">DNA-binding</keyword>
<keyword id="KW-0479">Metal-binding</keyword>
<keyword id="KW-0539">Nucleus</keyword>
<keyword id="KW-0677">Repeat</keyword>
<keyword id="KW-0678">Repressor</keyword>
<keyword id="KW-0804">Transcription</keyword>
<keyword id="KW-0805">Transcription regulation</keyword>
<keyword id="KW-0862">Zinc</keyword>
<keyword id="KW-0863">Zinc-finger</keyword>
<protein>
    <recommendedName>
        <fullName>pH-response transcription factor pacC/RIM101</fullName>
    </recommendedName>
</protein>
<name>PACC_FUSO4</name>
<feature type="chain" id="PRO_0000046833" description="pH-response transcription factor pacC/RIM101">
    <location>
        <begin position="1"/>
        <end position="609"/>
    </location>
</feature>
<feature type="zinc finger region" description="C2H2-type 1" evidence="2">
    <location>
        <begin position="61"/>
        <end position="86"/>
    </location>
</feature>
<feature type="zinc finger region" description="C2H2-type 2" evidence="2">
    <location>
        <begin position="97"/>
        <end position="121"/>
    </location>
</feature>
<feature type="zinc finger region" description="C2H2-type 3" evidence="2">
    <location>
        <begin position="127"/>
        <end position="149"/>
    </location>
</feature>
<feature type="region of interest" description="Disordered" evidence="3">
    <location>
        <begin position="1"/>
        <end position="58"/>
    </location>
</feature>
<feature type="region of interest" description="Disordered" evidence="3">
    <location>
        <begin position="143"/>
        <end position="178"/>
    </location>
</feature>
<feature type="region of interest" description="Disordered" evidence="3">
    <location>
        <begin position="294"/>
        <end position="314"/>
    </location>
</feature>
<feature type="region of interest" description="Disordered" evidence="3">
    <location>
        <begin position="405"/>
        <end position="531"/>
    </location>
</feature>
<feature type="region of interest" description="Disordered" evidence="3">
    <location>
        <begin position="562"/>
        <end position="609"/>
    </location>
</feature>
<feature type="short sequence motif" description="YPX[LI] motif 1">
    <location>
        <begin position="447"/>
        <end position="450"/>
    </location>
</feature>
<feature type="short sequence motif" description="YPX[LI] motif 2">
    <location>
        <begin position="601"/>
        <end position="604"/>
    </location>
</feature>
<feature type="compositionally biased region" description="Low complexity" evidence="3">
    <location>
        <begin position="11"/>
        <end position="57"/>
    </location>
</feature>
<feature type="compositionally biased region" description="Basic and acidic residues" evidence="3">
    <location>
        <begin position="143"/>
        <end position="154"/>
    </location>
</feature>
<feature type="compositionally biased region" description="Polar residues" evidence="3">
    <location>
        <begin position="405"/>
        <end position="414"/>
    </location>
</feature>
<feature type="compositionally biased region" description="Low complexity" evidence="3">
    <location>
        <begin position="415"/>
        <end position="437"/>
    </location>
</feature>
<feature type="compositionally biased region" description="Polar residues" evidence="3">
    <location>
        <begin position="438"/>
        <end position="456"/>
    </location>
</feature>
<feature type="compositionally biased region" description="Polar residues" evidence="3">
    <location>
        <begin position="502"/>
        <end position="513"/>
    </location>
</feature>
<feature type="compositionally biased region" description="Basic and acidic residues" evidence="3">
    <location>
        <begin position="562"/>
        <end position="581"/>
    </location>
</feature>
<accession>Q870A3</accession>
<accession>J9MH66</accession>